<evidence type="ECO:0000250" key="1"/>
<evidence type="ECO:0000250" key="2">
    <source>
        <dbReference type="UniProtKB" id="O70325"/>
    </source>
</evidence>
<evidence type="ECO:0000250" key="3">
    <source>
        <dbReference type="UniProtKB" id="P04041"/>
    </source>
</evidence>
<evidence type="ECO:0000250" key="4">
    <source>
        <dbReference type="UniProtKB" id="P07203"/>
    </source>
</evidence>
<evidence type="ECO:0000250" key="5">
    <source>
        <dbReference type="UniProtKB" id="P11352"/>
    </source>
</evidence>
<evidence type="ECO:0000305" key="6"/>
<proteinExistence type="evidence at transcript level"/>
<accession>Q8MJ14</accession>
<protein>
    <recommendedName>
        <fullName evidence="6">Glutathione peroxidase 1</fullName>
        <shortName>GPx-1</shortName>
        <shortName>GSHPx-1</shortName>
        <ecNumber evidence="4">1.11.1.9</ecNumber>
    </recommendedName>
    <alternativeName>
        <fullName>Cellular glutathione peroxidase</fullName>
    </alternativeName>
    <alternativeName>
        <fullName>Phospholipid-hydroperoxide glutathione peroxidase GPX1</fullName>
        <ecNumber evidence="4">1.11.1.12</ecNumber>
    </alternativeName>
</protein>
<dbReference type="EC" id="1.11.1.9" evidence="4"/>
<dbReference type="EC" id="1.11.1.12" evidence="4"/>
<dbReference type="EMBL" id="AF532927">
    <property type="protein sequence ID" value="AAM94630.1"/>
    <property type="molecule type" value="mRNA"/>
</dbReference>
<dbReference type="RefSeq" id="NP_999366.1">
    <property type="nucleotide sequence ID" value="NM_214201.1"/>
</dbReference>
<dbReference type="FunCoup" id="Q8MJ14">
    <property type="interactions" value="949"/>
</dbReference>
<dbReference type="IntAct" id="Q8MJ14">
    <property type="interactions" value="1"/>
</dbReference>
<dbReference type="STRING" id="9823.ENSSSCP00000042853"/>
<dbReference type="PeroxiBase" id="3722">
    <property type="entry name" value="SscGPx01"/>
</dbReference>
<dbReference type="GlyGen" id="Q8MJ14">
    <property type="glycosylation" value="1 site"/>
</dbReference>
<dbReference type="PeptideAtlas" id="Q8MJ14"/>
<dbReference type="GeneID" id="397403"/>
<dbReference type="KEGG" id="ssc:397403"/>
<dbReference type="CTD" id="2876"/>
<dbReference type="InParanoid" id="Q8MJ14"/>
<dbReference type="OrthoDB" id="446890at2759"/>
<dbReference type="Proteomes" id="UP000008227">
    <property type="component" value="Unplaced"/>
</dbReference>
<dbReference type="Proteomes" id="UP000314985">
    <property type="component" value="Unplaced"/>
</dbReference>
<dbReference type="Proteomes" id="UP000694570">
    <property type="component" value="Unplaced"/>
</dbReference>
<dbReference type="Proteomes" id="UP000694571">
    <property type="component" value="Unplaced"/>
</dbReference>
<dbReference type="Proteomes" id="UP000694720">
    <property type="component" value="Unplaced"/>
</dbReference>
<dbReference type="Proteomes" id="UP000694722">
    <property type="component" value="Unplaced"/>
</dbReference>
<dbReference type="Proteomes" id="UP000694723">
    <property type="component" value="Unplaced"/>
</dbReference>
<dbReference type="Proteomes" id="UP000694724">
    <property type="component" value="Unplaced"/>
</dbReference>
<dbReference type="Proteomes" id="UP000694725">
    <property type="component" value="Unplaced"/>
</dbReference>
<dbReference type="Proteomes" id="UP000694726">
    <property type="component" value="Unplaced"/>
</dbReference>
<dbReference type="Proteomes" id="UP000694727">
    <property type="component" value="Unplaced"/>
</dbReference>
<dbReference type="Proteomes" id="UP000694728">
    <property type="component" value="Unplaced"/>
</dbReference>
<dbReference type="GO" id="GO:0005829">
    <property type="term" value="C:cytosol"/>
    <property type="evidence" value="ECO:0000250"/>
    <property type="project" value="UniProtKB"/>
</dbReference>
<dbReference type="GO" id="GO:0005739">
    <property type="term" value="C:mitochondrion"/>
    <property type="evidence" value="ECO:0000318"/>
    <property type="project" value="GO_Central"/>
</dbReference>
<dbReference type="GO" id="GO:0004602">
    <property type="term" value="F:glutathione peroxidase activity"/>
    <property type="evidence" value="ECO:0000250"/>
    <property type="project" value="UniProtKB"/>
</dbReference>
<dbReference type="GO" id="GO:0047066">
    <property type="term" value="F:phospholipid-hydroperoxide glutathione peroxidase activity"/>
    <property type="evidence" value="ECO:0000250"/>
    <property type="project" value="UniProtKB"/>
</dbReference>
<dbReference type="GO" id="GO:0019369">
    <property type="term" value="P:arachidonate metabolic process"/>
    <property type="evidence" value="ECO:0000250"/>
    <property type="project" value="UniProtKB"/>
</dbReference>
<dbReference type="GO" id="GO:0006749">
    <property type="term" value="P:glutathione metabolic process"/>
    <property type="evidence" value="ECO:0000318"/>
    <property type="project" value="GO_Central"/>
</dbReference>
<dbReference type="GO" id="GO:0042744">
    <property type="term" value="P:hydrogen peroxide catabolic process"/>
    <property type="evidence" value="ECO:0000318"/>
    <property type="project" value="GO_Central"/>
</dbReference>
<dbReference type="GO" id="GO:0019372">
    <property type="term" value="P:lipoxygenase pathway"/>
    <property type="evidence" value="ECO:0000250"/>
    <property type="project" value="UniProtKB"/>
</dbReference>
<dbReference type="GO" id="GO:0042542">
    <property type="term" value="P:response to hydrogen peroxide"/>
    <property type="evidence" value="ECO:0000318"/>
    <property type="project" value="GO_Central"/>
</dbReference>
<dbReference type="GO" id="GO:0010269">
    <property type="term" value="P:response to selenium ion"/>
    <property type="evidence" value="ECO:0000318"/>
    <property type="project" value="GO_Central"/>
</dbReference>
<dbReference type="CDD" id="cd00340">
    <property type="entry name" value="GSH_Peroxidase"/>
    <property type="match status" value="1"/>
</dbReference>
<dbReference type="FunFam" id="3.40.30.10:FF:000153">
    <property type="entry name" value="Glutathione peroxidase"/>
    <property type="match status" value="1"/>
</dbReference>
<dbReference type="Gene3D" id="3.40.30.10">
    <property type="entry name" value="Glutaredoxin"/>
    <property type="match status" value="1"/>
</dbReference>
<dbReference type="InterPro" id="IPR000889">
    <property type="entry name" value="Glutathione_peroxidase"/>
</dbReference>
<dbReference type="InterPro" id="IPR029759">
    <property type="entry name" value="GPX_AS"/>
</dbReference>
<dbReference type="InterPro" id="IPR029760">
    <property type="entry name" value="GPX_CS"/>
</dbReference>
<dbReference type="InterPro" id="IPR036249">
    <property type="entry name" value="Thioredoxin-like_sf"/>
</dbReference>
<dbReference type="PANTHER" id="PTHR11592">
    <property type="entry name" value="GLUTATHIONE PEROXIDASE"/>
    <property type="match status" value="1"/>
</dbReference>
<dbReference type="PANTHER" id="PTHR11592:SF41">
    <property type="entry name" value="GLUTATHIONE PEROXIDASE 1"/>
    <property type="match status" value="1"/>
</dbReference>
<dbReference type="Pfam" id="PF00255">
    <property type="entry name" value="GSHPx"/>
    <property type="match status" value="1"/>
</dbReference>
<dbReference type="PIRSF" id="PIRSF000303">
    <property type="entry name" value="Glutathion_perox"/>
    <property type="match status" value="1"/>
</dbReference>
<dbReference type="PRINTS" id="PR01011">
    <property type="entry name" value="GLUTPROXDASE"/>
</dbReference>
<dbReference type="SUPFAM" id="SSF52833">
    <property type="entry name" value="Thioredoxin-like"/>
    <property type="match status" value="1"/>
</dbReference>
<dbReference type="PROSITE" id="PS00460">
    <property type="entry name" value="GLUTATHIONE_PEROXID_1"/>
    <property type="match status" value="1"/>
</dbReference>
<dbReference type="PROSITE" id="PS00763">
    <property type="entry name" value="GLUTATHIONE_PEROXID_2"/>
    <property type="match status" value="1"/>
</dbReference>
<dbReference type="PROSITE" id="PS51355">
    <property type="entry name" value="GLUTATHIONE_PEROXID_3"/>
    <property type="match status" value="1"/>
</dbReference>
<comment type="function">
    <text evidence="5">Catalyzes the reduction of hydroperoxides in a glutathione-dependent manner thus regulating cellular redox homeostasis. Can reduce small soluble hydroperoxides such as H2O2, cumene hydroperoxide and tert-butyl hydroperoxide, as well as several fatty acid-derived hydroperoxides. In platelets catalyzes the reduction of 12-hydroperoxyeicosatetraenoic acid, the primary product of the arachidonate 12-lipoxygenase pathway.</text>
</comment>
<comment type="catalytic activity">
    <reaction evidence="5">
        <text>2 glutathione + H2O2 = glutathione disulfide + 2 H2O</text>
        <dbReference type="Rhea" id="RHEA:16833"/>
        <dbReference type="ChEBI" id="CHEBI:15377"/>
        <dbReference type="ChEBI" id="CHEBI:16240"/>
        <dbReference type="ChEBI" id="CHEBI:57925"/>
        <dbReference type="ChEBI" id="CHEBI:58297"/>
        <dbReference type="EC" id="1.11.1.9"/>
    </reaction>
    <physiologicalReaction direction="left-to-right" evidence="5">
        <dbReference type="Rhea" id="RHEA:16834"/>
    </physiologicalReaction>
</comment>
<comment type="catalytic activity">
    <reaction evidence="4">
        <text>a hydroperoxy polyunsaturated fatty acid + 2 glutathione = a hydroxy polyunsaturated fatty acid + glutathione disulfide + H2O</text>
        <dbReference type="Rhea" id="RHEA:19057"/>
        <dbReference type="ChEBI" id="CHEBI:15377"/>
        <dbReference type="ChEBI" id="CHEBI:57925"/>
        <dbReference type="ChEBI" id="CHEBI:58297"/>
        <dbReference type="ChEBI" id="CHEBI:131871"/>
        <dbReference type="ChEBI" id="CHEBI:134019"/>
        <dbReference type="EC" id="1.11.1.12"/>
    </reaction>
    <physiologicalReaction direction="left-to-right" evidence="4">
        <dbReference type="Rhea" id="RHEA:19058"/>
    </physiologicalReaction>
</comment>
<comment type="catalytic activity">
    <reaction evidence="4">
        <text>tert-butyl hydroperoxide + 2 glutathione = tert-butanol + glutathione disulfide + H2O</text>
        <dbReference type="Rhea" id="RHEA:69412"/>
        <dbReference type="ChEBI" id="CHEBI:15377"/>
        <dbReference type="ChEBI" id="CHEBI:45895"/>
        <dbReference type="ChEBI" id="CHEBI:57925"/>
        <dbReference type="ChEBI" id="CHEBI:58297"/>
        <dbReference type="ChEBI" id="CHEBI:64090"/>
    </reaction>
    <physiologicalReaction direction="left-to-right" evidence="4">
        <dbReference type="Rhea" id="RHEA:69413"/>
    </physiologicalReaction>
</comment>
<comment type="catalytic activity">
    <reaction evidence="4">
        <text>cumene hydroperoxide + 2 glutathione = 2-phenylpropan-2-ol + glutathione disulfide + H2O</text>
        <dbReference type="Rhea" id="RHEA:69651"/>
        <dbReference type="ChEBI" id="CHEBI:15377"/>
        <dbReference type="ChEBI" id="CHEBI:57925"/>
        <dbReference type="ChEBI" id="CHEBI:58297"/>
        <dbReference type="ChEBI" id="CHEBI:78673"/>
        <dbReference type="ChEBI" id="CHEBI:131607"/>
    </reaction>
    <physiologicalReaction direction="left-to-right" evidence="4">
        <dbReference type="Rhea" id="RHEA:69652"/>
    </physiologicalReaction>
</comment>
<comment type="catalytic activity">
    <reaction evidence="4">
        <text>(13S)-hydroperoxy-(9Z,11E)-octadecadienoate + 2 glutathione = (13S)-hydroxy-(9Z,11E)-octadecadienoate + glutathione disulfide + H2O</text>
        <dbReference type="Rhea" id="RHEA:48888"/>
        <dbReference type="ChEBI" id="CHEBI:15377"/>
        <dbReference type="ChEBI" id="CHEBI:57466"/>
        <dbReference type="ChEBI" id="CHEBI:57925"/>
        <dbReference type="ChEBI" id="CHEBI:58297"/>
        <dbReference type="ChEBI" id="CHEBI:90850"/>
    </reaction>
    <physiologicalReaction direction="left-to-right" evidence="4">
        <dbReference type="Rhea" id="RHEA:48889"/>
    </physiologicalReaction>
</comment>
<comment type="catalytic activity">
    <reaction evidence="4">
        <text>(9S)-hydroperoxy-(10E,12Z)-octadecadienoate + 2 glutathione = (9S)-hydroxy-(10E,12Z)-octadecadienoate + glutathione disulfide + H2O</text>
        <dbReference type="Rhea" id="RHEA:76687"/>
        <dbReference type="ChEBI" id="CHEBI:15377"/>
        <dbReference type="ChEBI" id="CHEBI:57925"/>
        <dbReference type="ChEBI" id="CHEBI:58297"/>
        <dbReference type="ChEBI" id="CHEBI:60955"/>
        <dbReference type="ChEBI" id="CHEBI:77852"/>
    </reaction>
    <physiologicalReaction direction="left-to-right" evidence="4">
        <dbReference type="Rhea" id="RHEA:76688"/>
    </physiologicalReaction>
</comment>
<comment type="catalytic activity">
    <reaction evidence="4">
        <text>(5S)-hydroperoxy-(6E,8Z,11Z,14Z)-eicosatetraenoate + 2 glutathione = (5S)-hydroxy-(6E,8Z,11Z,14Z)-eicosatetraenoate + glutathione disulfide + H2O</text>
        <dbReference type="Rhea" id="RHEA:48620"/>
        <dbReference type="ChEBI" id="CHEBI:15377"/>
        <dbReference type="ChEBI" id="CHEBI:57450"/>
        <dbReference type="ChEBI" id="CHEBI:57925"/>
        <dbReference type="ChEBI" id="CHEBI:58297"/>
        <dbReference type="ChEBI" id="CHEBI:90632"/>
    </reaction>
    <physiologicalReaction direction="left-to-right" evidence="4">
        <dbReference type="Rhea" id="RHEA:48621"/>
    </physiologicalReaction>
</comment>
<comment type="catalytic activity">
    <reaction evidence="5">
        <text>(12S)-hydroperoxy-(5Z,8Z,10E,14Z)-eicosatetraenoate + 2 glutathione = (12S)-hydroxy-(5Z,8Z,10E,14Z)-eicosatetraenoate + glutathione disulfide + H2O</text>
        <dbReference type="Rhea" id="RHEA:50708"/>
        <dbReference type="ChEBI" id="CHEBI:15377"/>
        <dbReference type="ChEBI" id="CHEBI:57444"/>
        <dbReference type="ChEBI" id="CHEBI:57925"/>
        <dbReference type="ChEBI" id="CHEBI:58297"/>
        <dbReference type="ChEBI" id="CHEBI:90680"/>
    </reaction>
    <physiologicalReaction direction="left-to-right" evidence="5">
        <dbReference type="Rhea" id="RHEA:50709"/>
    </physiologicalReaction>
</comment>
<comment type="catalytic activity">
    <reaction evidence="4">
        <text>(12R)-hydroperoxy-(5Z,8Z,10E,14Z)-eicosatetraenoate + 2 glutathione = (12R)-hydroxy-(5Z,8Z,10E,14Z)-eicosatetraenoate + glutathione disulfide + H2O</text>
        <dbReference type="Rhea" id="RHEA:76691"/>
        <dbReference type="ChEBI" id="CHEBI:15377"/>
        <dbReference type="ChEBI" id="CHEBI:57925"/>
        <dbReference type="ChEBI" id="CHEBI:58297"/>
        <dbReference type="ChEBI" id="CHEBI:75230"/>
        <dbReference type="ChEBI" id="CHEBI:83343"/>
    </reaction>
    <physiologicalReaction direction="left-to-right" evidence="4">
        <dbReference type="Rhea" id="RHEA:76692"/>
    </physiologicalReaction>
</comment>
<comment type="catalytic activity">
    <reaction evidence="4">
        <text>(15S)-hydroperoxy-(5Z,8Z,11Z,13E)-eicosatetraenoate + 2 glutathione = (15S)-hydroxy-(5Z,8Z,11Z,13E)-eicosatetraenoate + glutathione disulfide + H2O</text>
        <dbReference type="Rhea" id="RHEA:76695"/>
        <dbReference type="ChEBI" id="CHEBI:15377"/>
        <dbReference type="ChEBI" id="CHEBI:57409"/>
        <dbReference type="ChEBI" id="CHEBI:57446"/>
        <dbReference type="ChEBI" id="CHEBI:57925"/>
        <dbReference type="ChEBI" id="CHEBI:58297"/>
    </reaction>
    <physiologicalReaction direction="left-to-right" evidence="4">
        <dbReference type="Rhea" id="RHEA:76696"/>
    </physiologicalReaction>
</comment>
<comment type="catalytic activity">
    <reaction evidence="4">
        <text>(5S)-hydroperoxy-(6E,8Z,11Z,14Z,17Z)-eicosapentaenoate + 2 glutathione = (5S)-hydroxy-(6E,8Z,11Z,14Z,17Z)-eicosapentaenoate + glutathione disulfide + H2O</text>
        <dbReference type="Rhea" id="RHEA:76699"/>
        <dbReference type="ChEBI" id="CHEBI:15377"/>
        <dbReference type="ChEBI" id="CHEBI:57925"/>
        <dbReference type="ChEBI" id="CHEBI:58297"/>
        <dbReference type="ChEBI" id="CHEBI:195399"/>
        <dbReference type="ChEBI" id="CHEBI:195400"/>
    </reaction>
    <physiologicalReaction direction="left-to-right" evidence="4">
        <dbReference type="Rhea" id="RHEA:76700"/>
    </physiologicalReaction>
</comment>
<comment type="catalytic activity">
    <reaction evidence="4">
        <text>(12S)-hydroperoxy-(5Z,8Z,10E,14Z,17Z)-eicosapentaenoate + 2 glutathione = (12S)-hydroxy-(5Z,8Z,10E,14Z,17Z)-eicosapentaenoate + glutathione disulfide + H2O</text>
        <dbReference type="Rhea" id="RHEA:76703"/>
        <dbReference type="ChEBI" id="CHEBI:15377"/>
        <dbReference type="ChEBI" id="CHEBI:57925"/>
        <dbReference type="ChEBI" id="CHEBI:58297"/>
        <dbReference type="ChEBI" id="CHEBI:90772"/>
        <dbReference type="ChEBI" id="CHEBI:195401"/>
    </reaction>
    <physiologicalReaction direction="left-to-right" evidence="4">
        <dbReference type="Rhea" id="RHEA:76704"/>
    </physiologicalReaction>
</comment>
<comment type="catalytic activity">
    <reaction evidence="4">
        <text>(15S)-hydroperoxy-(5Z,8Z,11Z,13E,17Z)-eicosapentaenoate + 2 glutathione = (15S)-hydroxy-(5Z,8Z,11Z,13E,17Z)-eicosapentaenoate + glutathione disulfide + H2O</text>
        <dbReference type="Rhea" id="RHEA:76707"/>
        <dbReference type="ChEBI" id="CHEBI:15377"/>
        <dbReference type="ChEBI" id="CHEBI:57925"/>
        <dbReference type="ChEBI" id="CHEBI:58297"/>
        <dbReference type="ChEBI" id="CHEBI:132087"/>
        <dbReference type="ChEBI" id="CHEBI:194369"/>
    </reaction>
    <physiologicalReaction direction="left-to-right" evidence="4">
        <dbReference type="Rhea" id="RHEA:76708"/>
    </physiologicalReaction>
</comment>
<comment type="catalytic activity">
    <reaction evidence="4">
        <text>(15S)-hydroperoxy-(11Z,13E)-eicosadienoate + 2 glutathione = (15S)-hydroxy-(11Z,13E)-eicosadienoate + glutathione disulfide + H2O</text>
        <dbReference type="Rhea" id="RHEA:76711"/>
        <dbReference type="ChEBI" id="CHEBI:15377"/>
        <dbReference type="ChEBI" id="CHEBI:57925"/>
        <dbReference type="ChEBI" id="CHEBI:58297"/>
        <dbReference type="ChEBI" id="CHEBI:144832"/>
        <dbReference type="ChEBI" id="CHEBI:195402"/>
    </reaction>
    <physiologicalReaction direction="left-to-right" evidence="4">
        <dbReference type="Rhea" id="RHEA:76712"/>
    </physiologicalReaction>
</comment>
<comment type="catalytic activity">
    <reaction evidence="4">
        <text>(17S)-hydroperoxy-(4Z,7Z,10Z,13Z,15E,19Z)-docosahexaenoate + 2 glutathione = (17S)-hydroxy-(4Z,7Z,10Z,13Z,15E,19Z)-docosahexaenoate + glutathione disulfide + H2O</text>
        <dbReference type="Rhea" id="RHEA:76715"/>
        <dbReference type="ChEBI" id="CHEBI:15377"/>
        <dbReference type="ChEBI" id="CHEBI:57925"/>
        <dbReference type="ChEBI" id="CHEBI:58297"/>
        <dbReference type="ChEBI" id="CHEBI:133795"/>
        <dbReference type="ChEBI" id="CHEBI:195403"/>
    </reaction>
    <physiologicalReaction direction="left-to-right" evidence="4">
        <dbReference type="Rhea" id="RHEA:76716"/>
    </physiologicalReaction>
</comment>
<comment type="subunit">
    <text evidence="5">Homotetramer. Interacts with MIEN1 (By similarity).</text>
</comment>
<comment type="subcellular location">
    <subcellularLocation>
        <location evidence="5">Cytoplasm</location>
    </subcellularLocation>
    <subcellularLocation>
        <location evidence="5">Mitochondrion</location>
    </subcellularLocation>
</comment>
<comment type="PTM">
    <text evidence="5">During periods of oxidative stress, Sec-52 may react with a superoxide radical, irreversibly lose hydroselenide and be converted to dehydroalanine.</text>
</comment>
<comment type="similarity">
    <text evidence="6">Belongs to the glutathione peroxidase family.</text>
</comment>
<reference key="1">
    <citation type="submission" date="2002-07" db="EMBL/GenBank/DDBJ databases">
        <title>Sus scrofa selenium-containing enzyme cytosolic glutathione peroxidase 1 (cGPX1) from the day 13 embryo.</title>
        <authorList>
            <person name="Hostetler C.E."/>
            <person name="Robison M.R."/>
            <person name="Kincaid R.L."/>
            <person name="Ott T.L."/>
        </authorList>
    </citation>
    <scope>NUCLEOTIDE SEQUENCE [MRNA]</scope>
</reference>
<name>GPX1_PIG</name>
<gene>
    <name type="primary">GPX1</name>
</gene>
<organism>
    <name type="scientific">Sus scrofa</name>
    <name type="common">Pig</name>
    <dbReference type="NCBI Taxonomy" id="9823"/>
    <lineage>
        <taxon>Eukaryota</taxon>
        <taxon>Metazoa</taxon>
        <taxon>Chordata</taxon>
        <taxon>Craniata</taxon>
        <taxon>Vertebrata</taxon>
        <taxon>Euteleostomi</taxon>
        <taxon>Mammalia</taxon>
        <taxon>Eutheria</taxon>
        <taxon>Laurasiatheria</taxon>
        <taxon>Artiodactyla</taxon>
        <taxon>Suina</taxon>
        <taxon>Suidae</taxon>
        <taxon>Sus</taxon>
    </lineage>
</organism>
<feature type="chain" id="PRO_0000066614" description="Glutathione peroxidase 1">
    <location>
        <begin position="1"/>
        <end position="206"/>
    </location>
</feature>
<feature type="active site" evidence="2">
    <location>
        <position position="52"/>
    </location>
</feature>
<feature type="site" description="Subject to oxidation and hydroselenide loss to dehydroalanine" evidence="1">
    <location>
        <position position="52"/>
    </location>
</feature>
<feature type="non-standard amino acid" description="Selenocysteine" evidence="5">
    <location>
        <position position="52"/>
    </location>
</feature>
<feature type="modified residue" description="Phosphoserine" evidence="3">
    <location>
        <position position="37"/>
    </location>
</feature>
<feature type="modified residue" description="N6-acetyllysine; alternate" evidence="5">
    <location>
        <position position="91"/>
    </location>
</feature>
<feature type="modified residue" description="N6-succinyllysine; alternate" evidence="5">
    <location>
        <position position="91"/>
    </location>
</feature>
<feature type="modified residue" description="N6-acetyllysine; alternate" evidence="5">
    <location>
        <position position="117"/>
    </location>
</feature>
<feature type="modified residue" description="N6-succinyllysine; alternate" evidence="5">
    <location>
        <position position="117"/>
    </location>
</feature>
<feature type="modified residue" description="N6-acetyllysine; alternate" evidence="5">
    <location>
        <position position="151"/>
    </location>
</feature>
<feature type="modified residue" description="N6-succinyllysine; alternate" evidence="5">
    <location>
        <position position="151"/>
    </location>
</feature>
<feature type="modified residue" description="Phosphoserine" evidence="3">
    <location>
        <position position="200"/>
    </location>
</feature>
<feature type="modified residue" description="Phosphoserine" evidence="4">
    <location>
        <position position="204"/>
    </location>
</feature>
<sequence length="206" mass="22591">MCAAQRSAAALAAVAPRSVYAFSARPLAGGEPISLGSLRGKVLLIENVASLUGTTVRDYTQMNELQRRLGPRGLVVLGFPCNQFGHQENAKNGEILNCLKYVRPGGGFEPNFMLFEKCEVNGANAHPLFAFLREALPTPSDDATALMTDPKFITWSPVCRNDIAWNFEKFLVGPDGVPLRRYSRRFLTIDIEPDIEALLSQEPSSA</sequence>
<keyword id="KW-0007">Acetylation</keyword>
<keyword id="KW-0963">Cytoplasm</keyword>
<keyword id="KW-0443">Lipid metabolism</keyword>
<keyword id="KW-0496">Mitochondrion</keyword>
<keyword id="KW-0560">Oxidoreductase</keyword>
<keyword id="KW-0575">Peroxidase</keyword>
<keyword id="KW-0597">Phosphoprotein</keyword>
<keyword id="KW-1185">Reference proteome</keyword>
<keyword id="KW-0712">Selenocysteine</keyword>